<organism>
    <name type="scientific">Frankia alni (strain DSM 45986 / CECT 9034 / ACN14a)</name>
    <dbReference type="NCBI Taxonomy" id="326424"/>
    <lineage>
        <taxon>Bacteria</taxon>
        <taxon>Bacillati</taxon>
        <taxon>Actinomycetota</taxon>
        <taxon>Actinomycetes</taxon>
        <taxon>Frankiales</taxon>
        <taxon>Frankiaceae</taxon>
        <taxon>Frankia</taxon>
    </lineage>
</organism>
<proteinExistence type="inferred from homology"/>
<comment type="function">
    <text evidence="1">Single strand-specific metallo-endoribonuclease involved in late-stage 70S ribosome quality control and in maturation of the 3' terminus of the 16S rRNA.</text>
</comment>
<comment type="cofactor">
    <cofactor evidence="1">
        <name>Zn(2+)</name>
        <dbReference type="ChEBI" id="CHEBI:29105"/>
    </cofactor>
    <text evidence="1">Binds 1 zinc ion.</text>
</comment>
<comment type="subcellular location">
    <subcellularLocation>
        <location evidence="1">Cytoplasm</location>
    </subcellularLocation>
</comment>
<comment type="similarity">
    <text evidence="1">Belongs to the endoribonuclease YbeY family.</text>
</comment>
<feature type="chain" id="PRO_0000284211" description="Endoribonuclease YbeY">
    <location>
        <begin position="1"/>
        <end position="181"/>
    </location>
</feature>
<feature type="region of interest" description="Disordered" evidence="2">
    <location>
        <begin position="157"/>
        <end position="181"/>
    </location>
</feature>
<feature type="compositionally biased region" description="Gly residues" evidence="2">
    <location>
        <begin position="161"/>
        <end position="174"/>
    </location>
</feature>
<feature type="binding site" evidence="1">
    <location>
        <position position="120"/>
    </location>
    <ligand>
        <name>Zn(2+)</name>
        <dbReference type="ChEBI" id="CHEBI:29105"/>
        <note>catalytic</note>
    </ligand>
</feature>
<feature type="binding site" evidence="1">
    <location>
        <position position="124"/>
    </location>
    <ligand>
        <name>Zn(2+)</name>
        <dbReference type="ChEBI" id="CHEBI:29105"/>
        <note>catalytic</note>
    </ligand>
</feature>
<feature type="binding site" evidence="1">
    <location>
        <position position="130"/>
    </location>
    <ligand>
        <name>Zn(2+)</name>
        <dbReference type="ChEBI" id="CHEBI:29105"/>
        <note>catalytic</note>
    </ligand>
</feature>
<sequence length="181" mass="19475">MAVFVANESGANDVDEVRLTALARFVLDAMKVNPLAELSVMLVEEKAMADLHVRYMGEEGPTDVLSFAQDDAFDASWSESVDDDPTTLLGDVVLCPDVARRQAEQAGHSHERELHLLCTHGILHLLGYDHAEPDEEREMWKIQNKLLASWDTAVKAAGGKRPAGGADGADGAGEPGPTAAR</sequence>
<name>YBEY_FRAAA</name>
<keyword id="KW-0963">Cytoplasm</keyword>
<keyword id="KW-0255">Endonuclease</keyword>
<keyword id="KW-0378">Hydrolase</keyword>
<keyword id="KW-0479">Metal-binding</keyword>
<keyword id="KW-0540">Nuclease</keyword>
<keyword id="KW-1185">Reference proteome</keyword>
<keyword id="KW-0690">Ribosome biogenesis</keyword>
<keyword id="KW-0698">rRNA processing</keyword>
<keyword id="KW-0862">Zinc</keyword>
<reference key="1">
    <citation type="journal article" date="2007" name="Genome Res.">
        <title>Genome characteristics of facultatively symbiotic Frankia sp. strains reflect host range and host plant biogeography.</title>
        <authorList>
            <person name="Normand P."/>
            <person name="Lapierre P."/>
            <person name="Tisa L.S."/>
            <person name="Gogarten J.P."/>
            <person name="Alloisio N."/>
            <person name="Bagnarol E."/>
            <person name="Bassi C.A."/>
            <person name="Berry A.M."/>
            <person name="Bickhart D.M."/>
            <person name="Choisne N."/>
            <person name="Couloux A."/>
            <person name="Cournoyer B."/>
            <person name="Cruveiller S."/>
            <person name="Daubin V."/>
            <person name="Demange N."/>
            <person name="Francino M.P."/>
            <person name="Goltsman E."/>
            <person name="Huang Y."/>
            <person name="Kopp O.R."/>
            <person name="Labarre L."/>
            <person name="Lapidus A."/>
            <person name="Lavire C."/>
            <person name="Marechal J."/>
            <person name="Martinez M."/>
            <person name="Mastronunzio J.E."/>
            <person name="Mullin B.C."/>
            <person name="Niemann J."/>
            <person name="Pujic P."/>
            <person name="Rawnsley T."/>
            <person name="Rouy Z."/>
            <person name="Schenowitz C."/>
            <person name="Sellstedt A."/>
            <person name="Tavares F."/>
            <person name="Tomkins J.P."/>
            <person name="Vallenet D."/>
            <person name="Valverde C."/>
            <person name="Wall L.G."/>
            <person name="Wang Y."/>
            <person name="Medigue C."/>
            <person name="Benson D.R."/>
        </authorList>
    </citation>
    <scope>NUCLEOTIDE SEQUENCE [LARGE SCALE GENOMIC DNA]</scope>
    <source>
        <strain>DSM 45986 / CECT 9034 / ACN14a</strain>
    </source>
</reference>
<accession>Q0RP74</accession>
<gene>
    <name evidence="1" type="primary">ybeY</name>
    <name type="ordered locus">FRAAL2010</name>
</gene>
<evidence type="ECO:0000255" key="1">
    <source>
        <dbReference type="HAMAP-Rule" id="MF_00009"/>
    </source>
</evidence>
<evidence type="ECO:0000256" key="2">
    <source>
        <dbReference type="SAM" id="MobiDB-lite"/>
    </source>
</evidence>
<protein>
    <recommendedName>
        <fullName evidence="1">Endoribonuclease YbeY</fullName>
        <ecNumber evidence="1">3.1.-.-</ecNumber>
    </recommendedName>
</protein>
<dbReference type="EC" id="3.1.-.-" evidence="1"/>
<dbReference type="EMBL" id="CT573213">
    <property type="protein sequence ID" value="CAJ60659.1"/>
    <property type="molecule type" value="Genomic_DNA"/>
</dbReference>
<dbReference type="RefSeq" id="WP_011603182.1">
    <property type="nucleotide sequence ID" value="NC_008278.1"/>
</dbReference>
<dbReference type="SMR" id="Q0RP74"/>
<dbReference type="STRING" id="326424.FRAAL2010"/>
<dbReference type="KEGG" id="fal:FRAAL2010"/>
<dbReference type="eggNOG" id="COG0319">
    <property type="taxonomic scope" value="Bacteria"/>
</dbReference>
<dbReference type="HOGENOM" id="CLU_106710_3_2_11"/>
<dbReference type="OrthoDB" id="9807740at2"/>
<dbReference type="Proteomes" id="UP000000657">
    <property type="component" value="Chromosome"/>
</dbReference>
<dbReference type="GO" id="GO:0005737">
    <property type="term" value="C:cytoplasm"/>
    <property type="evidence" value="ECO:0007669"/>
    <property type="project" value="UniProtKB-SubCell"/>
</dbReference>
<dbReference type="GO" id="GO:0004222">
    <property type="term" value="F:metalloendopeptidase activity"/>
    <property type="evidence" value="ECO:0007669"/>
    <property type="project" value="InterPro"/>
</dbReference>
<dbReference type="GO" id="GO:0004521">
    <property type="term" value="F:RNA endonuclease activity"/>
    <property type="evidence" value="ECO:0007669"/>
    <property type="project" value="UniProtKB-UniRule"/>
</dbReference>
<dbReference type="GO" id="GO:0008270">
    <property type="term" value="F:zinc ion binding"/>
    <property type="evidence" value="ECO:0007669"/>
    <property type="project" value="UniProtKB-UniRule"/>
</dbReference>
<dbReference type="GO" id="GO:0006364">
    <property type="term" value="P:rRNA processing"/>
    <property type="evidence" value="ECO:0007669"/>
    <property type="project" value="UniProtKB-UniRule"/>
</dbReference>
<dbReference type="Gene3D" id="3.40.390.30">
    <property type="entry name" value="Metalloproteases ('zincins'), catalytic domain"/>
    <property type="match status" value="1"/>
</dbReference>
<dbReference type="HAMAP" id="MF_00009">
    <property type="entry name" value="Endoribonucl_YbeY"/>
    <property type="match status" value="1"/>
</dbReference>
<dbReference type="InterPro" id="IPR023091">
    <property type="entry name" value="MetalPrtase_cat_dom_sf_prd"/>
</dbReference>
<dbReference type="InterPro" id="IPR002036">
    <property type="entry name" value="YbeY"/>
</dbReference>
<dbReference type="InterPro" id="IPR020549">
    <property type="entry name" value="YbeY_CS"/>
</dbReference>
<dbReference type="NCBIfam" id="TIGR00043">
    <property type="entry name" value="rRNA maturation RNase YbeY"/>
    <property type="match status" value="1"/>
</dbReference>
<dbReference type="PANTHER" id="PTHR46986">
    <property type="entry name" value="ENDORIBONUCLEASE YBEY, CHLOROPLASTIC"/>
    <property type="match status" value="1"/>
</dbReference>
<dbReference type="PANTHER" id="PTHR46986:SF1">
    <property type="entry name" value="ENDORIBONUCLEASE YBEY, CHLOROPLASTIC"/>
    <property type="match status" value="1"/>
</dbReference>
<dbReference type="Pfam" id="PF02130">
    <property type="entry name" value="YbeY"/>
    <property type="match status" value="1"/>
</dbReference>
<dbReference type="SUPFAM" id="SSF55486">
    <property type="entry name" value="Metalloproteases ('zincins'), catalytic domain"/>
    <property type="match status" value="1"/>
</dbReference>
<dbReference type="PROSITE" id="PS01306">
    <property type="entry name" value="UPF0054"/>
    <property type="match status" value="1"/>
</dbReference>